<keyword id="KW-0963">Cytoplasm</keyword>
<keyword id="KW-1185">Reference proteome</keyword>
<protein>
    <recommendedName>
        <fullName>DNA damage-inducible transcript 4-like protein</fullName>
    </recommendedName>
    <alternativeName>
        <fullName>HIF-1 responsive protein RTP801-like</fullName>
    </alternativeName>
    <alternativeName>
        <fullName>Protein regulated in development and DNA damage response 2</fullName>
        <shortName>REDD-2</shortName>
    </alternativeName>
</protein>
<gene>
    <name type="primary">DDIT4L</name>
    <name type="synonym">REDD2</name>
    <name type="synonym">RTP801L</name>
</gene>
<comment type="function">
    <text evidence="3 4">Inhibits cell growth by regulating the TOR signaling pathway upstream of the TSC1-TSC2 complex and downstream of AKT1.</text>
</comment>
<comment type="interaction">
    <interactant intactId="EBI-742054">
        <id>Q96D03</id>
    </interactant>
    <interactant intactId="EBI-3914067">
        <id>O95342</id>
        <label>ABCB11</label>
    </interactant>
    <organismsDiffer>false</organismsDiffer>
    <experiments>3</experiments>
</comment>
<comment type="interaction">
    <interactant intactId="EBI-742054">
        <id>Q96D03</id>
    </interactant>
    <interactant intactId="EBI-3916242">
        <id>Q96HD9</id>
        <label>ACY3</label>
    </interactant>
    <organismsDiffer>false</organismsDiffer>
    <experiments>5</experiments>
</comment>
<comment type="interaction">
    <interactant intactId="EBI-742054">
        <id>Q96D03</id>
    </interactant>
    <interactant intactId="EBI-13286382">
        <id>Q63HM1</id>
        <label>AFMID</label>
    </interactant>
    <organismsDiffer>false</organismsDiffer>
    <experiments>5</experiments>
</comment>
<comment type="interaction">
    <interactant intactId="EBI-742054">
        <id>Q96D03</id>
    </interactant>
    <interactant intactId="EBI-4401674">
        <id>Q96BJ3</id>
        <label>AIDA</label>
    </interactant>
    <organismsDiffer>false</organismsDiffer>
    <experiments>3</experiments>
</comment>
<comment type="interaction">
    <interactant intactId="EBI-742054">
        <id>Q96D03</id>
    </interactant>
    <interactant intactId="EBI-296087">
        <id>P31749</id>
        <label>AKT1</label>
    </interactant>
    <organismsDiffer>false</organismsDiffer>
    <experiments>3</experiments>
</comment>
<comment type="interaction">
    <interactant intactId="EBI-742054">
        <id>Q96D03</id>
    </interactant>
    <interactant intactId="EBI-10312733">
        <id>Q9NR81</id>
        <label>ARHGEF3</label>
    </interactant>
    <organismsDiffer>false</organismsDiffer>
    <experiments>3</experiments>
</comment>
<comment type="interaction">
    <interactant intactId="EBI-742054">
        <id>Q96D03</id>
    </interactant>
    <interactant intactId="EBI-742108">
        <id>Q96B23</id>
        <label>ARK2N</label>
    </interactant>
    <organismsDiffer>false</organismsDiffer>
    <experiments>3</experiments>
</comment>
<comment type="interaction">
    <interactant intactId="EBI-742054">
        <id>Q96D03</id>
    </interactant>
    <interactant intactId="EBI-10258086">
        <id>Q7Z6K5</id>
        <label>ARPIN</label>
    </interactant>
    <organismsDiffer>false</organismsDiffer>
    <experiments>3</experiments>
</comment>
<comment type="interaction">
    <interactant intactId="EBI-742054">
        <id>Q96D03</id>
    </interactant>
    <interactant intactId="EBI-21977454">
        <id>O14525-2</id>
        <label>ASTN1</label>
    </interactant>
    <organismsDiffer>false</organismsDiffer>
    <experiments>3</experiments>
</comment>
<comment type="interaction">
    <interactant intactId="EBI-742054">
        <id>Q96D03</id>
    </interactant>
    <interactant intactId="EBI-2949658">
        <id>O95429</id>
        <label>BAG4</label>
    </interactant>
    <organismsDiffer>false</organismsDiffer>
    <experiments>3</experiments>
</comment>
<comment type="interaction">
    <interactant intactId="EBI-742054">
        <id>Q96D03</id>
    </interactant>
    <interactant intactId="EBI-11977289">
        <id>Q9H503-2</id>
        <label>BANF2</label>
    </interactant>
    <organismsDiffer>false</organismsDiffer>
    <experiments>3</experiments>
</comment>
<comment type="interaction">
    <interactant intactId="EBI-742054">
        <id>Q96D03</id>
    </interactant>
    <interactant intactId="EBI-1385773">
        <id>Q9BZR8</id>
        <label>BCL2L14</label>
    </interactant>
    <organismsDiffer>false</organismsDiffer>
    <experiments>3</experiments>
</comment>
<comment type="interaction">
    <interactant intactId="EBI-742054">
        <id>Q96D03</id>
    </interactant>
    <interactant intactId="EBI-519672">
        <id>P55957</id>
        <label>BID</label>
    </interactant>
    <organismsDiffer>false</organismsDiffer>
    <experiments>3</experiments>
</comment>
<comment type="interaction">
    <interactant intactId="EBI-742054">
        <id>Q96D03</id>
    </interactant>
    <interactant intactId="EBI-725606">
        <id>Q9NWQ9</id>
        <label>C14orf119</label>
    </interactant>
    <organismsDiffer>false</organismsDiffer>
    <experiments>3</experiments>
</comment>
<comment type="interaction">
    <interactant intactId="EBI-742054">
        <id>Q96D03</id>
    </interactant>
    <interactant intactId="EBI-741214">
        <id>Q9UFG5</id>
        <label>C19orf25</label>
    </interactant>
    <organismsDiffer>false</organismsDiffer>
    <experiments>3</experiments>
</comment>
<comment type="interaction">
    <interactant intactId="EBI-742054">
        <id>Q96D03</id>
    </interactant>
    <interactant intactId="EBI-746224">
        <id>Q49AR2</id>
        <label>C5orf22</label>
    </interactant>
    <organismsDiffer>false</organismsDiffer>
    <experiments>3</experiments>
</comment>
<comment type="interaction">
    <interactant intactId="EBI-742054">
        <id>Q96D03</id>
    </interactant>
    <interactant intactId="EBI-10311131">
        <id>Q9NP86</id>
        <label>CABP5</label>
    </interactant>
    <organismsDiffer>false</organismsDiffer>
    <experiments>3</experiments>
</comment>
<comment type="interaction">
    <interactant intactId="EBI-742054">
        <id>Q96D03</id>
    </interactant>
    <interactant intactId="EBI-739580">
        <id>Q13137</id>
        <label>CALCOCO2</label>
    </interactant>
    <organismsDiffer>false</organismsDiffer>
    <experiments>3</experiments>
</comment>
<comment type="interaction">
    <interactant intactId="EBI-742054">
        <id>Q96D03</id>
    </interactant>
    <interactant intactId="EBI-11530605">
        <id>Q9H257-2</id>
        <label>CARD9</label>
    </interactant>
    <organismsDiffer>false</organismsDiffer>
    <experiments>3</experiments>
</comment>
<comment type="interaction">
    <interactant intactId="EBI-742054">
        <id>Q96D03</id>
    </interactant>
    <interactant intactId="EBI-10258233">
        <id>Q7Z7H3</id>
        <label>CATIP</label>
    </interactant>
    <organismsDiffer>false</organismsDiffer>
    <experiments>3</experiments>
</comment>
<comment type="interaction">
    <interactant intactId="EBI-742054">
        <id>Q96D03</id>
    </interactant>
    <interactant intactId="EBI-741406">
        <id>P51946</id>
        <label>CCNH</label>
    </interactant>
    <organismsDiffer>false</organismsDiffer>
    <experiments>3</experiments>
</comment>
<comment type="interaction">
    <interactant intactId="EBI-742054">
        <id>Q96D03</id>
    </interactant>
    <interactant intactId="EBI-12010594">
        <id>O75909-2</id>
        <label>CCNK</label>
    </interactant>
    <organismsDiffer>false</organismsDiffer>
    <experiments>3</experiments>
</comment>
<comment type="interaction">
    <interactant intactId="EBI-742054">
        <id>Q96D03</id>
    </interactant>
    <interactant intactId="EBI-9250559">
        <id>P32320</id>
        <label>CDA</label>
    </interactant>
    <organismsDiffer>false</organismsDiffer>
    <experiments>5</experiments>
</comment>
<comment type="interaction">
    <interactant intactId="EBI-742054">
        <id>Q96D03</id>
    </interactant>
    <interactant intactId="EBI-374969">
        <id>O75419</id>
        <label>CDC45</label>
    </interactant>
    <organismsDiffer>false</organismsDiffer>
    <experiments>3</experiments>
</comment>
<comment type="interaction">
    <interactant intactId="EBI-742054">
        <id>Q96D03</id>
    </interactant>
    <interactant intactId="EBI-745859">
        <id>P55273</id>
        <label>CDKN2D</label>
    </interactant>
    <organismsDiffer>false</organismsDiffer>
    <experiments>3</experiments>
</comment>
<comment type="interaction">
    <interactant intactId="EBI-742054">
        <id>Q96D03</id>
    </interactant>
    <interactant intactId="EBI-2802782">
        <id>Q6NVV7</id>
        <label>CDPF1</label>
    </interactant>
    <organismsDiffer>false</organismsDiffer>
    <experiments>3</experiments>
</comment>
<comment type="interaction">
    <interactant intactId="EBI-742054">
        <id>Q96D03</id>
    </interactant>
    <interactant intactId="EBI-741885">
        <id>Q96LK0</id>
        <label>CEP19</label>
    </interactant>
    <organismsDiffer>false</organismsDiffer>
    <experiments>3</experiments>
</comment>
<comment type="interaction">
    <interactant intactId="EBI-742054">
        <id>Q96D03</id>
    </interactant>
    <interactant intactId="EBI-1057156">
        <id>Q9HD42</id>
        <label>CHMP1A</label>
    </interactant>
    <organismsDiffer>false</organismsDiffer>
    <experiments>3</experiments>
</comment>
<comment type="interaction">
    <interactant intactId="EBI-742054">
        <id>Q96D03</id>
    </interactant>
    <interactant intactId="EBI-10192241">
        <id>O95833</id>
        <label>CLIC3</label>
    </interactant>
    <organismsDiffer>false</organismsDiffer>
    <experiments>3</experiments>
</comment>
<comment type="interaction">
    <interactant intactId="EBI-742054">
        <id>Q96D03</id>
    </interactant>
    <interactant intactId="EBI-750020">
        <id>P49760</id>
        <label>CLK2</label>
    </interactant>
    <organismsDiffer>false</organismsDiffer>
    <experiments>3</experiments>
</comment>
<comment type="interaction">
    <interactant intactId="EBI-742054">
        <id>Q96D03</id>
    </interactant>
    <interactant intactId="EBI-745579">
        <id>P49761</id>
        <label>CLK3</label>
    </interactant>
    <organismsDiffer>false</organismsDiffer>
    <experiments>3</experiments>
</comment>
<comment type="interaction">
    <interactant intactId="EBI-742054">
        <id>Q96D03</id>
    </interactant>
    <interactant intactId="EBI-12012272">
        <id>Q9UBL6-2</id>
        <label>CPNE7</label>
    </interactant>
    <organismsDiffer>false</organismsDiffer>
    <experiments>5</experiments>
</comment>
<comment type="interaction">
    <interactant intactId="EBI-742054">
        <id>Q96D03</id>
    </interactant>
    <interactant intactId="EBI-347859">
        <id>Q10570</id>
        <label>CPSF1</label>
    </interactant>
    <organismsDiffer>false</organismsDiffer>
    <experiments>3</experiments>
</comment>
<comment type="interaction">
    <interactant intactId="EBI-742054">
        <id>Q96D03</id>
    </interactant>
    <interactant intactId="EBI-2872414">
        <id>Q8IUI8</id>
        <label>CRLF3</label>
    </interactant>
    <organismsDiffer>false</organismsDiffer>
    <experiments>3</experiments>
</comment>
<comment type="interaction">
    <interactant intactId="EBI-742054">
        <id>Q96D03</id>
    </interactant>
    <interactant intactId="EBI-7519424">
        <id>P53674</id>
        <label>CRYBB1</label>
    </interactant>
    <organismsDiffer>false</organismsDiffer>
    <experiments>3</experiments>
</comment>
<comment type="interaction">
    <interactant intactId="EBI-742054">
        <id>Q96D03</id>
    </interactant>
    <interactant intactId="EBI-1380630">
        <id>P41240</id>
        <label>CSK</label>
    </interactant>
    <organismsDiffer>false</organismsDiffer>
    <experiments>3</experiments>
</comment>
<comment type="interaction">
    <interactant intactId="EBI-742054">
        <id>Q96D03</id>
    </interactant>
    <interactant intactId="EBI-1188472">
        <id>P78358</id>
        <label>CTAG1B</label>
    </interactant>
    <organismsDiffer>false</organismsDiffer>
    <experiments>3</experiments>
</comment>
<comment type="interaction">
    <interactant intactId="EBI-742054">
        <id>Q96D03</id>
    </interactant>
    <interactant intactId="EBI-11962928">
        <id>Q9UI47-2</id>
        <label>CTNNA3</label>
    </interactant>
    <organismsDiffer>false</organismsDiffer>
    <experiments>3</experiments>
</comment>
<comment type="interaction">
    <interactant intactId="EBI-742054">
        <id>Q96D03</id>
    </interactant>
    <interactant intactId="EBI-12847580">
        <id>P07108-2</id>
        <label>DBI</label>
    </interactant>
    <organismsDiffer>false</organismsDiffer>
    <experiments>3</experiments>
</comment>
<comment type="interaction">
    <interactant intactId="EBI-742054">
        <id>Q96D03</id>
    </interactant>
    <interactant intactId="EBI-723569">
        <id>Q9H773</id>
        <label>DCTPP1</label>
    </interactant>
    <organismsDiffer>false</organismsDiffer>
    <experiments>3</experiments>
</comment>
<comment type="interaction">
    <interactant intactId="EBI-742054">
        <id>Q96D03</id>
    </interactant>
    <interactant intactId="EBI-748597">
        <id>Q05D60</id>
        <label>DEUP1</label>
    </interactant>
    <organismsDiffer>false</organismsDiffer>
    <experiments>3</experiments>
</comment>
<comment type="interaction">
    <interactant intactId="EBI-742054">
        <id>Q96D03</id>
    </interactant>
    <interactant intactId="EBI-748674">
        <id>O43598</id>
        <label>DNPH1</label>
    </interactant>
    <organismsDiffer>false</organismsDiffer>
    <experiments>5</experiments>
</comment>
<comment type="interaction">
    <interactant intactId="EBI-742054">
        <id>Q96D03</id>
    </interactant>
    <interactant intactId="EBI-6918542">
        <id>Q8TEW6</id>
        <label>DOK4</label>
    </interactant>
    <organismsDiffer>false</organismsDiffer>
    <experiments>3</experiments>
</comment>
<comment type="interaction">
    <interactant intactId="EBI-742054">
        <id>Q96D03</id>
    </interactant>
    <interactant intactId="EBI-724940">
        <id>Q9BVJ7</id>
        <label>DUSP23</label>
    </interactant>
    <organismsDiffer>false</organismsDiffer>
    <experiments>3</experiments>
</comment>
<comment type="interaction">
    <interactant intactId="EBI-742054">
        <id>Q96D03</id>
    </interactant>
    <interactant intactId="EBI-1054321">
        <id>Q68J44</id>
        <label>DUSP29</label>
    </interactant>
    <organismsDiffer>false</organismsDiffer>
    <experiments>3</experiments>
</comment>
<comment type="interaction">
    <interactant intactId="EBI-742054">
        <id>Q96D03</id>
    </interactant>
    <interactant intactId="EBI-10232522">
        <id>Q14240-2</id>
        <label>EIF4A2</label>
    </interactant>
    <organismsDiffer>false</organismsDiffer>
    <experiments>3</experiments>
</comment>
<comment type="interaction">
    <interactant intactId="EBI-742054">
        <id>Q96D03</id>
    </interactant>
    <interactant intactId="EBI-299104">
        <id>P38919</id>
        <label>EIF4A3</label>
    </interactant>
    <organismsDiffer>false</organismsDiffer>
    <experiments>3</experiments>
</comment>
<comment type="interaction">
    <interactant intactId="EBI-742054">
        <id>Q96D03</id>
    </interactant>
    <interactant intactId="EBI-74090">
        <id>Q13541</id>
        <label>EIF4EBP1</label>
    </interactant>
    <organismsDiffer>false</organismsDiffer>
    <experiments>3</experiments>
</comment>
<comment type="interaction">
    <interactant intactId="EBI-742054">
        <id>Q96D03</id>
    </interactant>
    <interactant intactId="EBI-12222405">
        <id>Q15056-2</id>
        <label>EIF4H</label>
    </interactant>
    <organismsDiffer>false</organismsDiffer>
    <experiments>3</experiments>
</comment>
<comment type="interaction">
    <interactant intactId="EBI-742054">
        <id>Q96D03</id>
    </interactant>
    <interactant intactId="EBI-11748557">
        <id>Q9Y6C2-2</id>
        <label>EMILIN1</label>
    </interactant>
    <organismsDiffer>false</organismsDiffer>
    <experiments>3</experiments>
</comment>
<comment type="interaction">
    <interactant intactId="EBI-742054">
        <id>Q96D03</id>
    </interactant>
    <interactant intactId="EBI-1046713">
        <id>Q32P44</id>
        <label>EML3</label>
    </interactant>
    <organismsDiffer>false</organismsDiffer>
    <experiments>3</experiments>
</comment>
<comment type="interaction">
    <interactant intactId="EBI-742054">
        <id>Q96D03</id>
    </interactant>
    <interactant intactId="EBI-10182490">
        <id>O15197-2</id>
        <label>EPHB6</label>
    </interactant>
    <organismsDiffer>false</organismsDiffer>
    <experiments>3</experiments>
</comment>
<comment type="interaction">
    <interactant intactId="EBI-742054">
        <id>Q96D03</id>
    </interactant>
    <interactant intactId="EBI-371892">
        <id>Q9Y3B2</id>
        <label>EXOSC1</label>
    </interactant>
    <organismsDiffer>false</organismsDiffer>
    <experiments>3</experiments>
</comment>
<comment type="interaction">
    <interactant intactId="EBI-742054">
        <id>Q96D03</id>
    </interactant>
    <interactant intactId="EBI-371876">
        <id>Q9NQT4</id>
        <label>EXOSC5</label>
    </interactant>
    <organismsDiffer>false</organismsDiffer>
    <experiments>3</experiments>
</comment>
<comment type="interaction">
    <interactant intactId="EBI-742054">
        <id>Q96D03</id>
    </interactant>
    <interactant intactId="EBI-371922">
        <id>Q96B26</id>
        <label>EXOSC8</label>
    </interactant>
    <organismsDiffer>false</organismsDiffer>
    <experiments>3</experiments>
</comment>
<comment type="interaction">
    <interactant intactId="EBI-742054">
        <id>Q96D03</id>
    </interactant>
    <interactant intactId="EBI-12013806">
        <id>Q6NZ36-4</id>
        <label>FAAP20</label>
    </interactant>
    <organismsDiffer>false</organismsDiffer>
    <experiments>3</experiments>
</comment>
<comment type="interaction">
    <interactant intactId="EBI-742054">
        <id>Q96D03</id>
    </interactant>
    <interactant intactId="EBI-494804">
        <id>Q13158</id>
        <label>FADD</label>
    </interactant>
    <organismsDiffer>false</organismsDiffer>
    <experiments>3</experiments>
</comment>
<comment type="interaction">
    <interactant intactId="EBI-742054">
        <id>Q96D03</id>
    </interactant>
    <interactant intactId="EBI-7186123">
        <id>Q8IZ13</id>
        <label>FAM200C</label>
    </interactant>
    <organismsDiffer>false</organismsDiffer>
    <experiments>3</experiments>
</comment>
<comment type="interaction">
    <interactant intactId="EBI-742054">
        <id>Q96D03</id>
    </interactant>
    <interactant intactId="EBI-741760">
        <id>P49789</id>
        <label>FHIT</label>
    </interactant>
    <organismsDiffer>false</organismsDiffer>
    <experiments>3</experiments>
</comment>
<comment type="interaction">
    <interactant intactId="EBI-742054">
        <id>Q96D03</id>
    </interactant>
    <interactant intactId="EBI-701903">
        <id>Q14192</id>
        <label>FHL2</label>
    </interactant>
    <organismsDiffer>false</organismsDiffer>
    <experiments>3</experiments>
</comment>
<comment type="interaction">
    <interactant intactId="EBI-742054">
        <id>Q96D03</id>
    </interactant>
    <interactant intactId="EBI-744771">
        <id>O75344</id>
        <label>FKBP6</label>
    </interactant>
    <organismsDiffer>false</organismsDiffer>
    <experiments>3</experiments>
</comment>
<comment type="interaction">
    <interactant intactId="EBI-742054">
        <id>Q96D03</id>
    </interactant>
    <interactant intactId="EBI-9641086">
        <id>P21333-2</id>
        <label>FLNA</label>
    </interactant>
    <organismsDiffer>false</organismsDiffer>
    <experiments>5</experiments>
</comment>
<comment type="interaction">
    <interactant intactId="EBI-742054">
        <id>Q96D03</id>
    </interactant>
    <interactant intactId="EBI-448202">
        <id>O95257</id>
        <label>GADD45G</label>
    </interactant>
    <organismsDiffer>false</organismsDiffer>
    <experiments>3</experiments>
</comment>
<comment type="interaction">
    <interactant intactId="EBI-742054">
        <id>Q96D03</id>
    </interactant>
    <interactant intactId="EBI-752301">
        <id>Q8WXD5</id>
        <label>GEMIN6</label>
    </interactant>
    <organismsDiffer>false</organismsDiffer>
    <experiments>3</experiments>
</comment>
<comment type="interaction">
    <interactant intactId="EBI-742054">
        <id>Q96D03</id>
    </interactant>
    <interactant intactId="EBI-2515857">
        <id>O43681</id>
        <label>GET3</label>
    </interactant>
    <organismsDiffer>false</organismsDiffer>
    <experiments>3</experiments>
</comment>
<comment type="interaction">
    <interactant intactId="EBI-742054">
        <id>Q96D03</id>
    </interactant>
    <interactant intactId="EBI-746309">
        <id>Q92917</id>
        <label>GPKOW</label>
    </interactant>
    <organismsDiffer>false</organismsDiffer>
    <experiments>3</experiments>
</comment>
<comment type="interaction">
    <interactant intactId="EBI-742054">
        <id>Q96D03</id>
    </interactant>
    <interactant intactId="EBI-401755">
        <id>P62993</id>
        <label>GRB2</label>
    </interactant>
    <organismsDiffer>false</organismsDiffer>
    <experiments>3</experiments>
</comment>
<comment type="interaction">
    <interactant intactId="EBI-742054">
        <id>Q96D03</id>
    </interactant>
    <interactant intactId="EBI-6380438">
        <id>Q6ZYL4</id>
        <label>GTF2H5</label>
    </interactant>
    <organismsDiffer>false</organismsDiffer>
    <experiments>3</experiments>
</comment>
<comment type="interaction">
    <interactant intactId="EBI-742054">
        <id>Q96D03</id>
    </interactant>
    <interactant intactId="EBI-740290">
        <id>Q969Y2</id>
        <label>GTPBP3</label>
    </interactant>
    <organismsDiffer>false</organismsDiffer>
    <experiments>5</experiments>
</comment>
<comment type="interaction">
    <interactant intactId="EBI-742054">
        <id>Q96D03</id>
    </interactant>
    <interactant intactId="EBI-6873005">
        <id>P43080</id>
        <label>GUCA1A</label>
    </interactant>
    <organismsDiffer>false</organismsDiffer>
    <experiments>3</experiments>
</comment>
<comment type="interaction">
    <interactant intactId="EBI-742054">
        <id>Q96D03</id>
    </interactant>
    <interactant intactId="EBI-12094670">
        <id>Q8WUI4-6</id>
        <label>HDAC7</label>
    </interactant>
    <organismsDiffer>false</organismsDiffer>
    <experiments>3</experiments>
</comment>
<comment type="interaction">
    <interactant intactId="EBI-742054">
        <id>Q96D03</id>
    </interactant>
    <interactant intactId="EBI-740641">
        <id>Q9NP66</id>
        <label>HMG20A</label>
    </interactant>
    <organismsDiffer>false</organismsDiffer>
    <experiments>3</experiments>
</comment>
<comment type="interaction">
    <interactant intactId="EBI-742054">
        <id>Q96D03</id>
    </interactant>
    <interactant intactId="EBI-739361">
        <id>Q9UBY9</id>
        <label>HSPB7</label>
    </interactant>
    <organismsDiffer>false</organismsDiffer>
    <experiments>5</experiments>
</comment>
<comment type="interaction">
    <interactant intactId="EBI-742054">
        <id>Q96D03</id>
    </interactant>
    <interactant intactId="EBI-465156">
        <id>Q9UBH0</id>
        <label>IL36RN</label>
    </interactant>
    <organismsDiffer>false</organismsDiffer>
    <experiments>3</experiments>
</comment>
<comment type="interaction">
    <interactant intactId="EBI-742054">
        <id>Q96D03</id>
    </interactant>
    <interactant intactId="EBI-12188657">
        <id>P20839-3</id>
        <label>IMPDH1</label>
    </interactant>
    <organismsDiffer>false</organismsDiffer>
    <experiments>3</experiments>
</comment>
<comment type="interaction">
    <interactant intactId="EBI-742054">
        <id>Q96D03</id>
    </interactant>
    <interactant intactId="EBI-2556193">
        <id>Q63ZY3</id>
        <label>KANK2</label>
    </interactant>
    <organismsDiffer>false</organismsDiffer>
    <experiments>3</experiments>
</comment>
<comment type="interaction">
    <interactant intactId="EBI-742054">
        <id>Q96D03</id>
    </interactant>
    <interactant intactId="EBI-4397613">
        <id>Q7L273</id>
        <label>KCTD9</label>
    </interactant>
    <organismsDiffer>false</organismsDiffer>
    <experiments>3</experiments>
</comment>
<comment type="interaction">
    <interactant intactId="EBI-742054">
        <id>Q96D03</id>
    </interactant>
    <interactant intactId="EBI-12161375">
        <id>Q8N371-3</id>
        <label>KDM8</label>
    </interactant>
    <organismsDiffer>false</organismsDiffer>
    <experiments>3</experiments>
</comment>
<comment type="interaction">
    <interactant intactId="EBI-742054">
        <id>Q96D03</id>
    </interactant>
    <interactant intactId="EBI-1047093">
        <id>O76011</id>
        <label>KRT34</label>
    </interactant>
    <organismsDiffer>false</organismsDiffer>
    <experiments>3</experiments>
</comment>
<comment type="interaction">
    <interactant intactId="EBI-742054">
        <id>Q96D03</id>
    </interactant>
    <interactant intactId="EBI-10250562">
        <id>Q6L8G9</id>
        <label>KRTAP5-6</label>
    </interactant>
    <organismsDiffer>false</organismsDiffer>
    <experiments>3</experiments>
</comment>
<comment type="interaction">
    <interactant intactId="EBI-742054">
        <id>Q96D03</id>
    </interactant>
    <interactant intactId="EBI-726510">
        <id>Q96BZ8</id>
        <label>LENG1</label>
    </interactant>
    <organismsDiffer>false</organismsDiffer>
    <experiments>3</experiments>
</comment>
<comment type="interaction">
    <interactant intactId="EBI-742054">
        <id>Q96D03</id>
    </interactant>
    <interactant intactId="EBI-10274069">
        <id>Q8TCE9</id>
        <label>LGALS14</label>
    </interactant>
    <organismsDiffer>false</organismsDiffer>
    <experiments>3</experiments>
</comment>
<comment type="interaction">
    <interactant intactId="EBI-742054">
        <id>Q96D03</id>
    </interactant>
    <interactant intactId="EBI-357504">
        <id>P47929</id>
        <label>LGALS7B</label>
    </interactant>
    <organismsDiffer>false</organismsDiffer>
    <experiments>3</experiments>
</comment>
<comment type="interaction">
    <interactant intactId="EBI-742054">
        <id>Q96D03</id>
    </interactant>
    <interactant intactId="EBI-10241423">
        <id>Q3ZCW2</id>
        <label>LGALSL</label>
    </interactant>
    <organismsDiffer>false</organismsDiffer>
    <experiments>3</experiments>
</comment>
<comment type="interaction">
    <interactant intactId="EBI-742054">
        <id>Q96D03</id>
    </interactant>
    <interactant intactId="EBI-8639312">
        <id>P25800</id>
        <label>LMO1</label>
    </interactant>
    <organismsDiffer>false</organismsDiffer>
    <experiments>3</experiments>
</comment>
<comment type="interaction">
    <interactant intactId="EBI-742054">
        <id>Q96D03</id>
    </interactant>
    <interactant intactId="EBI-9057780">
        <id>Q96KN1</id>
        <label>LRATD2</label>
    </interactant>
    <organismsDiffer>false</organismsDiffer>
    <experiments>3</experiments>
</comment>
<comment type="interaction">
    <interactant intactId="EBI-742054">
        <id>Q96D03</id>
    </interactant>
    <interactant intactId="EBI-348239">
        <id>P62310</id>
        <label>LSM3</label>
    </interactant>
    <organismsDiffer>false</organismsDiffer>
    <experiments>3</experiments>
</comment>
<comment type="interaction">
    <interactant intactId="EBI-742054">
        <id>Q96D03</id>
    </interactant>
    <interactant intactId="EBI-373007">
        <id>Q9Y4Y9</id>
        <label>LSM5</label>
    </interactant>
    <organismsDiffer>false</organismsDiffer>
    <experiments>3</experiments>
</comment>
<comment type="interaction">
    <interactant intactId="EBI-742054">
        <id>Q96D03</id>
    </interactant>
    <interactant intactId="EBI-348372">
        <id>Q9UK45</id>
        <label>LSM7</label>
    </interactant>
    <organismsDiffer>false</organismsDiffer>
    <experiments>10</experiments>
</comment>
<comment type="interaction">
    <interactant intactId="EBI-742054">
        <id>Q96D03</id>
    </interactant>
    <interactant intactId="EBI-1057615">
        <id>O15479</id>
        <label>MAGEB2</label>
    </interactant>
    <organismsDiffer>false</organismsDiffer>
    <experiments>3</experiments>
</comment>
<comment type="interaction">
    <interactant intactId="EBI-742054">
        <id>Q96D03</id>
    </interactant>
    <interactant intactId="EBI-10215880">
        <id>P57077-4</id>
        <label>MAP3K7CL</label>
    </interactant>
    <organismsDiffer>false</organismsDiffer>
    <experiments>3</experiments>
</comment>
<comment type="interaction">
    <interactant intactId="EBI-742054">
        <id>Q96D03</id>
    </interactant>
    <interactant intactId="EBI-739717">
        <id>Q15555</id>
        <label>MAPRE2</label>
    </interactant>
    <organismsDiffer>false</organismsDiffer>
    <experiments>3</experiments>
</comment>
<comment type="interaction">
    <interactant intactId="EBI-742054">
        <id>Q96D03</id>
    </interactant>
    <interactant intactId="EBI-726739">
        <id>Q9UPY8</id>
        <label>MAPRE3</label>
    </interactant>
    <organismsDiffer>false</organismsDiffer>
    <experiments>3</experiments>
</comment>
<comment type="interaction">
    <interactant intactId="EBI-742054">
        <id>Q96D03</id>
    </interactant>
    <interactant intactId="EBI-1104564">
        <id>Q9Y316</id>
        <label>MEMO1</label>
    </interactant>
    <organismsDiffer>false</organismsDiffer>
    <experiments>3</experiments>
</comment>
<comment type="interaction">
    <interactant intactId="EBI-742054">
        <id>Q96D03</id>
    </interactant>
    <interactant intactId="EBI-6137472">
        <id>Q9BRT3</id>
        <label>MIEN1</label>
    </interactant>
    <organismsDiffer>false</organismsDiffer>
    <experiments>3</experiments>
</comment>
<comment type="interaction">
    <interactant intactId="EBI-742054">
        <id>Q96D03</id>
    </interactant>
    <interactant intactId="EBI-2340269">
        <id>Q13064</id>
        <label>MKRN3</label>
    </interactant>
    <organismsDiffer>false</organismsDiffer>
    <experiments>3</experiments>
</comment>
<comment type="interaction">
    <interactant intactId="EBI-742054">
        <id>Q96D03</id>
    </interactant>
    <interactant intactId="EBI-8852072">
        <id>Q9UH92-3</id>
        <label>MLX</label>
    </interactant>
    <organismsDiffer>false</organismsDiffer>
    <experiments>3</experiments>
</comment>
<comment type="interaction">
    <interactant intactId="EBI-742054">
        <id>Q96D03</id>
    </interactant>
    <interactant intactId="EBI-10288852">
        <id>Q9UBU8-2</id>
        <label>MORF4L1</label>
    </interactant>
    <organismsDiffer>false</organismsDiffer>
    <experiments>3</experiments>
</comment>
<comment type="interaction">
    <interactant intactId="EBI-742054">
        <id>Q96D03</id>
    </interactant>
    <interactant intactId="EBI-399257">
        <id>Q15014</id>
        <label>MORF4L2</label>
    </interactant>
    <organismsDiffer>false</organismsDiffer>
    <experiments>6</experiments>
</comment>
<comment type="interaction">
    <interactant intactId="EBI-742054">
        <id>Q96D03</id>
    </interactant>
    <interactant intactId="EBI-3911571">
        <id>Q8N339</id>
        <label>MT1M</label>
    </interactant>
    <organismsDiffer>false</organismsDiffer>
    <experiments>3</experiments>
</comment>
<comment type="interaction">
    <interactant intactId="EBI-742054">
        <id>Q96D03</id>
    </interactant>
    <interactant intactId="EBI-718622">
        <id>Q969H8</id>
        <label>MYDGF</label>
    </interactant>
    <organismsDiffer>false</organismsDiffer>
    <experiments>3</experiments>
</comment>
<comment type="interaction">
    <interactant intactId="EBI-742054">
        <id>Q96D03</id>
    </interactant>
    <interactant intactId="EBI-709754">
        <id>Q9HB07</id>
        <label>MYG1</label>
    </interactant>
    <organismsDiffer>false</organismsDiffer>
    <experiments>3</experiments>
</comment>
<comment type="interaction">
    <interactant intactId="EBI-742054">
        <id>Q96D03</id>
    </interactant>
    <interactant intactId="EBI-300817">
        <id>P60660</id>
        <label>MYL6</label>
    </interactant>
    <organismsDiffer>false</organismsDiffer>
    <experiments>3</experiments>
</comment>
<comment type="interaction">
    <interactant intactId="EBI-742054">
        <id>Q96D03</id>
    </interactant>
    <interactant intactId="EBI-6952711">
        <id>Q8WY64</id>
        <label>MYLIP</label>
    </interactant>
    <organismsDiffer>false</organismsDiffer>
    <experiments>3</experiments>
</comment>
<comment type="interaction">
    <interactant intactId="EBI-742054">
        <id>Q96D03</id>
    </interactant>
    <interactant intactId="EBI-747693">
        <id>P41227</id>
        <label>NAA10</label>
    </interactant>
    <organismsDiffer>false</organismsDiffer>
    <experiments>4</experiments>
</comment>
<comment type="interaction">
    <interactant intactId="EBI-742054">
        <id>Q96D03</id>
    </interactant>
    <interactant intactId="EBI-11953718">
        <id>Q8NEY1-3</id>
        <label>NAV1</label>
    </interactant>
    <organismsDiffer>false</organismsDiffer>
    <experiments>5</experiments>
</comment>
<comment type="interaction">
    <interactant intactId="EBI-742054">
        <id>Q96D03</id>
    </interactant>
    <interactant intactId="EBI-928842">
        <id>Q9GZM8</id>
        <label>NDEL1</label>
    </interactant>
    <organismsDiffer>false</organismsDiffer>
    <experiments>3</experiments>
</comment>
<comment type="interaction">
    <interactant intactId="EBI-742054">
        <id>Q96D03</id>
    </interactant>
    <interactant intactId="EBI-11978907">
        <id>Q9ULP0-2</id>
        <label>NDRG4</label>
    </interactant>
    <organismsDiffer>false</organismsDiffer>
    <experiments>3</experiments>
</comment>
<comment type="interaction">
    <interactant intactId="EBI-742054">
        <id>Q96D03</id>
    </interactant>
    <interactant intactId="EBI-11750983">
        <id>Q9HC98-4</id>
        <label>NEK6</label>
    </interactant>
    <organismsDiffer>false</organismsDiffer>
    <experiments>3</experiments>
</comment>
<comment type="interaction">
    <interactant intactId="EBI-742054">
        <id>Q96D03</id>
    </interactant>
    <interactant intactId="EBI-1055945">
        <id>Q8TDX7</id>
        <label>NEK7</label>
    </interactant>
    <organismsDiffer>false</organismsDiffer>
    <experiments>3</experiments>
</comment>
<comment type="interaction">
    <interactant intactId="EBI-742054">
        <id>Q96D03</id>
    </interactant>
    <interactant intactId="EBI-10311409">
        <id>Q9NPG2</id>
        <label>NGB</label>
    </interactant>
    <organismsDiffer>false</organismsDiffer>
    <experiments>3</experiments>
</comment>
<comment type="interaction">
    <interactant intactId="EBI-742054">
        <id>Q96D03</id>
    </interactant>
    <interactant intactId="EBI-12868744">
        <id>P0CG21</id>
        <label>NHLRC4</label>
    </interactant>
    <organismsDiffer>false</organismsDiffer>
    <experiments>3</experiments>
</comment>
<comment type="interaction">
    <interactant intactId="EBI-742054">
        <id>Q96D03</id>
    </interactant>
    <interactant intactId="EBI-6916466">
        <id>Q9BZQ8</id>
        <label>NIBAN1</label>
    </interactant>
    <organismsDiffer>false</organismsDiffer>
    <experiments>3</experiments>
</comment>
<comment type="interaction">
    <interactant intactId="EBI-742054">
        <id>Q96D03</id>
    </interactant>
    <interactant intactId="EBI-744782">
        <id>Q9Y5B8</id>
        <label>NME7</label>
    </interactant>
    <organismsDiffer>false</organismsDiffer>
    <experiments>3</experiments>
</comment>
<comment type="interaction">
    <interactant intactId="EBI-742054">
        <id>Q96D03</id>
    </interactant>
    <interactant intactId="EBI-358466">
        <id>P16083</id>
        <label>NQO2</label>
    </interactant>
    <organismsDiffer>false</organismsDiffer>
    <experiments>3</experiments>
</comment>
<comment type="interaction">
    <interactant intactId="EBI-742054">
        <id>Q96D03</id>
    </interactant>
    <interactant intactId="EBI-10260040">
        <id>Q86WQ0</id>
        <label>NR2C2AP</label>
    </interactant>
    <organismsDiffer>false</organismsDiffer>
    <experiments>3</experiments>
</comment>
<comment type="interaction">
    <interactant intactId="EBI-742054">
        <id>Q96D03</id>
    </interactant>
    <interactant intactId="EBI-1043825">
        <id>Q96G61</id>
        <label>NUDT11</label>
    </interactant>
    <organismsDiffer>false</organismsDiffer>
    <experiments>3</experiments>
</comment>
<comment type="interaction">
    <interactant intactId="EBI-742054">
        <id>Q96D03</id>
    </interactant>
    <interactant intactId="EBI-10096247">
        <id>P50583</id>
        <label>NUDT2</label>
    </interactant>
    <organismsDiffer>false</organismsDiffer>
    <experiments>3</experiments>
</comment>
<comment type="interaction">
    <interactant intactId="EBI-742054">
        <id>Q96D03</id>
    </interactant>
    <interactant intactId="EBI-10297093">
        <id>Q9BRQ3</id>
        <label>NUDT22</label>
    </interactant>
    <organismsDiffer>false</organismsDiffer>
    <experiments>3</experiments>
</comment>
<comment type="interaction">
    <interactant intactId="EBI-742054">
        <id>Q96D03</id>
    </interactant>
    <interactant intactId="EBI-713708">
        <id>O95989</id>
        <label>NUDT3</label>
    </interactant>
    <organismsDiffer>false</organismsDiffer>
    <experiments>3</experiments>
</comment>
<comment type="interaction">
    <interactant intactId="EBI-742054">
        <id>Q96D03</id>
    </interactant>
    <interactant intactId="EBI-10698339">
        <id>Q9NPJ8-3</id>
        <label>NXT2</label>
    </interactant>
    <organismsDiffer>false</organismsDiffer>
    <experiments>4</experiments>
</comment>
<comment type="interaction">
    <interactant intactId="EBI-742054">
        <id>Q96D03</id>
    </interactant>
    <interactant intactId="EBI-395883">
        <id>P07237</id>
        <label>P4HB</label>
    </interactant>
    <organismsDiffer>false</organismsDiffer>
    <experiments>3</experiments>
</comment>
<comment type="interaction">
    <interactant intactId="EBI-742054">
        <id>Q96D03</id>
    </interactant>
    <interactant intactId="EBI-10892722">
        <id>Q6TGC4</id>
        <label>PADI6</label>
    </interactant>
    <organismsDiffer>false</organismsDiffer>
    <experiments>3</experiments>
</comment>
<comment type="interaction">
    <interactant intactId="EBI-742054">
        <id>Q96D03</id>
    </interactant>
    <interactant intactId="EBI-3921217">
        <id>Q9HBI0</id>
        <label>PARVG</label>
    </interactant>
    <organismsDiffer>false</organismsDiffer>
    <experiments>3</experiments>
</comment>
<comment type="interaction">
    <interactant intactId="EBI-742054">
        <id>Q96D03</id>
    </interactant>
    <interactant intactId="EBI-536853">
        <id>Q96KB5</id>
        <label>PBK</label>
    </interactant>
    <organismsDiffer>false</organismsDiffer>
    <experiments>3</experiments>
</comment>
<comment type="interaction">
    <interactant intactId="EBI-742054">
        <id>Q96D03</id>
    </interactant>
    <interactant intactId="EBI-11983983">
        <id>P57721-2</id>
        <label>PCBP3</label>
    </interactant>
    <organismsDiffer>false</organismsDiffer>
    <experiments>3</experiments>
</comment>
<comment type="interaction">
    <interactant intactId="EBI-742054">
        <id>Q96D03</id>
    </interactant>
    <interactant intactId="EBI-12169289">
        <id>Q08493-2</id>
        <label>PDE4C</label>
    </interactant>
    <organismsDiffer>false</organismsDiffer>
    <experiments>3</experiments>
</comment>
<comment type="interaction">
    <interactant intactId="EBI-742054">
        <id>Q96D03</id>
    </interactant>
    <interactant intactId="EBI-709807">
        <id>P16118</id>
        <label>PFKFB1</label>
    </interactant>
    <organismsDiffer>false</organismsDiffer>
    <experiments>3</experiments>
</comment>
<comment type="interaction">
    <interactant intactId="EBI-742054">
        <id>Q96D03</id>
    </interactant>
    <interactant intactId="EBI-12138495">
        <id>Q99697-2</id>
        <label>PITX2</label>
    </interactant>
    <organismsDiffer>false</organismsDiffer>
    <experiments>3</experiments>
</comment>
<comment type="interaction">
    <interactant intactId="EBI-742054">
        <id>Q96D03</id>
    </interactant>
    <interactant intactId="EBI-1994037">
        <id>Q9Y263</id>
        <label>PLAA</label>
    </interactant>
    <organismsDiffer>false</organismsDiffer>
    <experiments>3</experiments>
</comment>
<comment type="interaction">
    <interactant intactId="EBI-742054">
        <id>Q96D03</id>
    </interactant>
    <interactant intactId="EBI-769257">
        <id>Q9NRQ2</id>
        <label>PLSCR4</label>
    </interactant>
    <organismsDiffer>false</organismsDiffer>
    <experiments>3</experiments>
</comment>
<comment type="interaction">
    <interactant intactId="EBI-742054">
        <id>Q96D03</id>
    </interactant>
    <interactant intactId="EBI-11339910">
        <id>Q8IYS1</id>
        <label>PM20D2</label>
    </interactant>
    <organismsDiffer>false</organismsDiffer>
    <experiments>3</experiments>
</comment>
<comment type="interaction">
    <interactant intactId="EBI-742054">
        <id>Q96D03</id>
    </interactant>
    <interactant intactId="EBI-1055562">
        <id>Q15126</id>
        <label>PMVK</label>
    </interactant>
    <organismsDiffer>false</organismsDiffer>
    <experiments>3</experiments>
</comment>
<comment type="interaction">
    <interactant intactId="EBI-742054">
        <id>Q96D03</id>
    </interactant>
    <interactant intactId="EBI-8673859">
        <id>P28069</id>
        <label>POU1F1</label>
    </interactant>
    <organismsDiffer>false</organismsDiffer>
    <experiments>3</experiments>
</comment>
<comment type="interaction">
    <interactant intactId="EBI-742054">
        <id>Q96D03</id>
    </interactant>
    <interactant intactId="EBI-724333">
        <id>Q96CD2</id>
        <label>PPCDC</label>
    </interactant>
    <organismsDiffer>false</organismsDiffer>
    <experiments>3</experiments>
</comment>
<comment type="interaction">
    <interactant intactId="EBI-742054">
        <id>Q96D03</id>
    </interactant>
    <interactant intactId="EBI-2557649">
        <id>Q9Y3C6</id>
        <label>PPIL1</label>
    </interactant>
    <organismsDiffer>false</organismsDiffer>
    <experiments>3</experiments>
</comment>
<comment type="interaction">
    <interactant intactId="EBI-742054">
        <id>Q96D03</id>
    </interactant>
    <interactant intactId="EBI-5235602">
        <id>Q86WC6</id>
        <label>PPP1R27</label>
    </interactant>
    <organismsDiffer>false</organismsDiffer>
    <experiments>3</experiments>
</comment>
<comment type="interaction">
    <interactant intactId="EBI-742054">
        <id>Q96D03</id>
    </interactant>
    <interactant intactId="EBI-1053424">
        <id>O43741</id>
        <label>PRKAB2</label>
    </interactant>
    <organismsDiffer>false</organismsDiffer>
    <experiments>3</experiments>
</comment>
<comment type="interaction">
    <interactant intactId="EBI-742054">
        <id>Q96D03</id>
    </interactant>
    <interactant intactId="EBI-2798416">
        <id>Q99633</id>
        <label>PRPF18</label>
    </interactant>
    <organismsDiffer>false</organismsDiffer>
    <experiments>3</experiments>
</comment>
<comment type="interaction">
    <interactant intactId="EBI-742054">
        <id>Q96D03</id>
    </interactant>
    <interactant intactId="EBI-5280197">
        <id>O75400-2</id>
        <label>PRPF40A</label>
    </interactant>
    <organismsDiffer>false</organismsDiffer>
    <experiments>3</experiments>
</comment>
<comment type="interaction">
    <interactant intactId="EBI-742054">
        <id>Q96D03</id>
    </interactant>
    <interactant intactId="EBI-749195">
        <id>P60891</id>
        <label>PRPS1</label>
    </interactant>
    <organismsDiffer>false</organismsDiffer>
    <experiments>3</experiments>
</comment>
<comment type="interaction">
    <interactant intactId="EBI-742054">
        <id>Q96D03</id>
    </interactant>
    <interactant intactId="EBI-359352">
        <id>P25786</id>
        <label>PSMA1</label>
    </interactant>
    <organismsDiffer>false</organismsDiffer>
    <experiments>3</experiments>
</comment>
<comment type="interaction">
    <interactant intactId="EBI-742054">
        <id>Q96D03</id>
    </interactant>
    <interactant intactId="EBI-603300">
        <id>P28065</id>
        <label>PSMB9</label>
    </interactant>
    <organismsDiffer>false</organismsDiffer>
    <experiments>3</experiments>
</comment>
<comment type="interaction">
    <interactant intactId="EBI-742054">
        <id>Q96D03</id>
    </interactant>
    <interactant intactId="EBI-712344">
        <id>Q03393</id>
        <label>PTS</label>
    </interactant>
    <organismsDiffer>false</organismsDiffer>
    <experiments>3</experiments>
</comment>
<comment type="interaction">
    <interactant intactId="EBI-742054">
        <id>Q96D03</id>
    </interactant>
    <interactant intactId="EBI-11529177">
        <id>Q9UHX1-2</id>
        <label>PUF60</label>
    </interactant>
    <organismsDiffer>false</organismsDiffer>
    <experiments>3</experiments>
</comment>
<comment type="interaction">
    <interactant intactId="EBI-742054">
        <id>Q96D03</id>
    </interactant>
    <interactant intactId="EBI-9837586">
        <id>Q13637</id>
        <label>RAB32</label>
    </interactant>
    <organismsDiffer>false</organismsDiffer>
    <experiments>3</experiments>
</comment>
<comment type="interaction">
    <interactant intactId="EBI-742054">
        <id>Q96D03</id>
    </interactant>
    <interactant intactId="EBI-712376">
        <id>P40937</id>
        <label>RFC5</label>
    </interactant>
    <organismsDiffer>false</organismsDiffer>
    <experiments>5</experiments>
</comment>
<comment type="interaction">
    <interactant intactId="EBI-742054">
        <id>Q96D03</id>
    </interactant>
    <interactant intactId="EBI-10188956">
        <id>O75679</id>
        <label>RFPL3</label>
    </interactant>
    <organismsDiffer>false</organismsDiffer>
    <experiments>3</experiments>
</comment>
<comment type="interaction">
    <interactant intactId="EBI-742054">
        <id>Q96D03</id>
    </interactant>
    <interactant intactId="EBI-373337">
        <id>O76064</id>
        <label>RNF8</label>
    </interactant>
    <organismsDiffer>false</organismsDiffer>
    <experiments>3</experiments>
</comment>
<comment type="interaction">
    <interactant intactId="EBI-742054">
        <id>Q96D03</id>
    </interactant>
    <interactant intactId="EBI-744831">
        <id>P49247</id>
        <label>RPIA</label>
    </interactant>
    <organismsDiffer>false</organismsDiffer>
    <experiments>3</experiments>
</comment>
<comment type="interaction">
    <interactant intactId="EBI-742054">
        <id>Q96D03</id>
    </interactant>
    <interactant intactId="EBI-354533">
        <id>P35268</id>
        <label>RPL22</label>
    </interactant>
    <organismsDiffer>false</organismsDiffer>
    <experiments>3</experiments>
</comment>
<comment type="interaction">
    <interactant intactId="EBI-742054">
        <id>Q96D03</id>
    </interactant>
    <interactant intactId="EBI-747925">
        <id>Q9NQG5</id>
        <label>RPRD1B</label>
    </interactant>
    <organismsDiffer>false</organismsDiffer>
    <experiments>3</experiments>
</comment>
<comment type="interaction">
    <interactant intactId="EBI-742054">
        <id>Q96D03</id>
    </interactant>
    <interactant intactId="EBI-10692913">
        <id>Q9UIL1-3</id>
        <label>SCOC</label>
    </interactant>
    <organismsDiffer>false</organismsDiffer>
    <experiments>3</experiments>
</comment>
<comment type="interaction">
    <interactant intactId="EBI-742054">
        <id>Q96D03</id>
    </interactant>
    <interactant intactId="EBI-12027936">
        <id>Q12765-2</id>
        <label>SCRN1</label>
    </interactant>
    <organismsDiffer>false</organismsDiffer>
    <experiments>3</experiments>
</comment>
<comment type="interaction">
    <interactant intactId="EBI-742054">
        <id>Q96D03</id>
    </interactant>
    <interactant intactId="EBI-12235008">
        <id>P55735-3</id>
        <label>SEC13</label>
    </interactant>
    <organismsDiffer>false</organismsDiffer>
    <experiments>3</experiments>
</comment>
<comment type="interaction">
    <interactant intactId="EBI-742054">
        <id>Q96D03</id>
    </interactant>
    <interactant intactId="EBI-8652744">
        <id>Q96IW7</id>
        <label>SEC22A</label>
    </interactant>
    <organismsDiffer>false</organismsDiffer>
    <experiments>3</experiments>
</comment>
<comment type="interaction">
    <interactant intactId="EBI-742054">
        <id>Q96D03</id>
    </interactant>
    <interactant intactId="EBI-693002">
        <id>Q8WYJ6</id>
        <label>SEPTIN1</label>
    </interactant>
    <organismsDiffer>false</organismsDiffer>
    <experiments>3</experiments>
</comment>
<comment type="interaction">
    <interactant intactId="EBI-742054">
        <id>Q96D03</id>
    </interactant>
    <interactant intactId="EBI-727037">
        <id>Q9UH03</id>
        <label>SEPTIN3</label>
    </interactant>
    <organismsDiffer>false</organismsDiffer>
    <experiments>3</experiments>
</comment>
<comment type="interaction">
    <interactant intactId="EBI-742054">
        <id>Q96D03</id>
    </interactant>
    <interactant intactId="EBI-373345">
        <id>Q99719</id>
        <label>SEPTIN5</label>
    </interactant>
    <organismsDiffer>false</organismsDiffer>
    <experiments>3</experiments>
</comment>
<comment type="interaction">
    <interactant intactId="EBI-742054">
        <id>Q96D03</id>
    </interactant>
    <interactant intactId="EBI-6983382">
        <id>O60880</id>
        <label>SH2D1A</label>
    </interactant>
    <organismsDiffer>false</organismsDiffer>
    <experiments>3</experiments>
</comment>
<comment type="interaction">
    <interactant intactId="EBI-742054">
        <id>Q96D03</id>
    </interactant>
    <interactant intactId="EBI-3923013">
        <id>O14796</id>
        <label>SH2D1B</label>
    </interactant>
    <organismsDiffer>false</organismsDiffer>
    <experiments>3</experiments>
</comment>
<comment type="interaction">
    <interactant intactId="EBI-742054">
        <id>Q96D03</id>
    </interactant>
    <interactant intactId="EBI-5234893">
        <id>Q9H299</id>
        <label>SH3BGRL3</label>
    </interactant>
    <organismsDiffer>false</organismsDiffer>
    <experiments>3</experiments>
</comment>
<comment type="interaction">
    <interactant intactId="EBI-742054">
        <id>Q96D03</id>
    </interactant>
    <interactant intactId="EBI-607085">
        <id>P09012</id>
        <label>SNRPA</label>
    </interactant>
    <organismsDiffer>false</organismsDiffer>
    <experiments>3</experiments>
</comment>
<comment type="interaction">
    <interactant intactId="EBI-742054">
        <id>Q96D03</id>
    </interactant>
    <interactant intactId="EBI-624585">
        <id>P62308</id>
        <label>SNRPG</label>
    </interactant>
    <organismsDiffer>false</organismsDiffer>
    <experiments>13</experiments>
</comment>
<comment type="interaction">
    <interactant intactId="EBI-742054">
        <id>Q96D03</id>
    </interactant>
    <interactant intactId="EBI-1171329">
        <id>Q92673</id>
        <label>SORL1</label>
    </interactant>
    <organismsDiffer>false</organismsDiffer>
    <experiments>3</experiments>
</comment>
<comment type="interaction">
    <interactant intactId="EBI-742054">
        <id>Q96D03</id>
    </interactant>
    <interactant intactId="EBI-10268630">
        <id>Q8N9Q2</id>
        <label>SREK1IP1</label>
    </interactant>
    <organismsDiffer>false</organismsDiffer>
    <experiments>3</experiments>
</comment>
<comment type="interaction">
    <interactant intactId="EBI-742054">
        <id>Q96D03</id>
    </interactant>
    <interactant intactId="EBI-745680">
        <id>Q96MF2</id>
        <label>STAC3</label>
    </interactant>
    <organismsDiffer>false</organismsDiffer>
    <experiments>3</experiments>
</comment>
<comment type="interaction">
    <interactant intactId="EBI-742054">
        <id>Q96D03</id>
    </interactant>
    <interactant intactId="EBI-749295">
        <id>O75716</id>
        <label>STK16</label>
    </interactant>
    <organismsDiffer>false</organismsDiffer>
    <experiments>3</experiments>
</comment>
<comment type="interaction">
    <interactant intactId="EBI-742054">
        <id>Q96D03</id>
    </interactant>
    <interactant intactId="EBI-14280485">
        <id>Q13043-2</id>
        <label>STK4</label>
    </interactant>
    <organismsDiffer>false</organismsDiffer>
    <experiments>3</experiments>
</comment>
<comment type="interaction">
    <interactant intactId="EBI-742054">
        <id>Q96D03</id>
    </interactant>
    <interactant intactId="EBI-749441">
        <id>O00204</id>
        <label>SULT2B1</label>
    </interactant>
    <organismsDiffer>false</organismsDiffer>
    <experiments>3</experiments>
</comment>
<comment type="interaction">
    <interactant intactId="EBI-742054">
        <id>Q96D03</id>
    </interactant>
    <interactant intactId="EBI-3921347">
        <id>P51687</id>
        <label>SUOX</label>
    </interactant>
    <organismsDiffer>false</organismsDiffer>
    <experiments>3</experiments>
</comment>
<comment type="interaction">
    <interactant intactId="EBI-742054">
        <id>Q96D03</id>
    </interactant>
    <interactant intactId="EBI-1045099">
        <id>Q9BW92</id>
        <label>TARS2</label>
    </interactant>
    <organismsDiffer>false</organismsDiffer>
    <experiments>3</experiments>
</comment>
<comment type="interaction">
    <interactant intactId="EBI-742054">
        <id>Q96D03</id>
    </interactant>
    <interactant intactId="EBI-8787464">
        <id>Q9NU19</id>
        <label>TBC1D22B</label>
    </interactant>
    <organismsDiffer>false</organismsDiffer>
    <experiments>3</experiments>
</comment>
<comment type="interaction">
    <interactant intactId="EBI-742054">
        <id>Q96D03</id>
    </interactant>
    <interactant intactId="EBI-7413767">
        <id>Q9Y242</id>
        <label>TCF19</label>
    </interactant>
    <organismsDiffer>false</organismsDiffer>
    <experiments>3</experiments>
</comment>
<comment type="interaction">
    <interactant intactId="EBI-742054">
        <id>Q96D03</id>
    </interactant>
    <interactant intactId="EBI-749995">
        <id>P56279</id>
        <label>TCL1A</label>
    </interactant>
    <organismsDiffer>false</organismsDiffer>
    <experiments>3</experiments>
</comment>
<comment type="interaction">
    <interactant intactId="EBI-742054">
        <id>Q96D03</id>
    </interactant>
    <interactant intactId="EBI-2555179">
        <id>Q9NUJ3</id>
        <label>TCP11L1</label>
    </interactant>
    <organismsDiffer>false</organismsDiffer>
    <experiments>3</experiments>
</comment>
<comment type="interaction">
    <interactant intactId="EBI-742054">
        <id>Q96D03</id>
    </interactant>
    <interactant intactId="EBI-750487">
        <id>Q8WW24</id>
        <label>TEKT4</label>
    </interactant>
    <organismsDiffer>false</organismsDiffer>
    <experiments>3</experiments>
</comment>
<comment type="interaction">
    <interactant intactId="EBI-742054">
        <id>Q96D03</id>
    </interactant>
    <interactant intactId="EBI-6674697">
        <id>Q8IWB6</id>
        <label>TEX14</label>
    </interactant>
    <organismsDiffer>false</organismsDiffer>
    <experiments>3</experiments>
</comment>
<comment type="interaction">
    <interactant intactId="EBI-742054">
        <id>Q96D03</id>
    </interactant>
    <interactant intactId="EBI-1245626">
        <id>P0C1Z6</id>
        <label>TFPT</label>
    </interactant>
    <organismsDiffer>false</organismsDiffer>
    <experiments>4</experiments>
</comment>
<comment type="interaction">
    <interactant intactId="EBI-742054">
        <id>Q96D03</id>
    </interactant>
    <interactant intactId="EBI-74615">
        <id>Q9H0E2</id>
        <label>TOLLIP</label>
    </interactant>
    <organismsDiffer>false</organismsDiffer>
    <experiments>3</experiments>
</comment>
<comment type="interaction">
    <interactant intactId="EBI-742054">
        <id>Q96D03</id>
    </interactant>
    <interactant intactId="EBI-11525489">
        <id>Q86WT6-2</id>
        <label>TRIM69</label>
    </interactant>
    <organismsDiffer>false</organismsDiffer>
    <experiments>3</experiments>
</comment>
<comment type="interaction">
    <interactant intactId="EBI-742054">
        <id>Q96D03</id>
    </interactant>
    <interactant intactId="EBI-10259086">
        <id>Q86UV6-2</id>
        <label>TRIM74</label>
    </interactant>
    <organismsDiffer>false</organismsDiffer>
    <experiments>3</experiments>
</comment>
<comment type="interaction">
    <interactant intactId="EBI-742054">
        <id>Q96D03</id>
    </interactant>
    <interactant intactId="EBI-372432">
        <id>Q8WW01</id>
        <label>TSEN15</label>
    </interactant>
    <organismsDiffer>false</organismsDiffer>
    <experiments>3</experiments>
</comment>
<comment type="interaction">
    <interactant intactId="EBI-742054">
        <id>Q96D03</id>
    </interactant>
    <interactant intactId="EBI-3918381">
        <id>Q96PN8</id>
        <label>TSSK3</label>
    </interactant>
    <organismsDiffer>false</organismsDiffer>
    <experiments>4</experiments>
</comment>
<comment type="interaction">
    <interactant intactId="EBI-742054">
        <id>Q96D03</id>
    </interactant>
    <interactant intactId="EBI-9526213">
        <id>Q8N0Z6</id>
        <label>TTC5</label>
    </interactant>
    <organismsDiffer>false</organismsDiffer>
    <experiments>3</experiments>
</comment>
<comment type="interaction">
    <interactant intactId="EBI-742054">
        <id>Q96D03</id>
    </interactant>
    <interactant intactId="EBI-594644">
        <id>P10599</id>
        <label>TXN</label>
    </interactant>
    <organismsDiffer>false</organismsDiffer>
    <experiments>5</experiments>
</comment>
<comment type="interaction">
    <interactant intactId="EBI-742054">
        <id>Q96D03</id>
    </interactant>
    <interactant intactId="EBI-746539">
        <id>P83876</id>
        <label>TXNL4A</label>
    </interactant>
    <organismsDiffer>false</organismsDiffer>
    <experiments>3</experiments>
</comment>
<comment type="interaction">
    <interactant intactId="EBI-742054">
        <id>Q96D03</id>
    </interactant>
    <interactant intactId="EBI-10974426">
        <id>Q6IPR3</id>
        <label>TYW3</label>
    </interactant>
    <organismsDiffer>false</organismsDiffer>
    <experiments>3</experiments>
</comment>
<comment type="interaction">
    <interactant intactId="EBI-742054">
        <id>Q96D03</id>
    </interactant>
    <interactant intactId="EBI-7353612">
        <id>P57075-2</id>
        <label>UBASH3A</label>
    </interactant>
    <organismsDiffer>false</organismsDiffer>
    <experiments>3</experiments>
</comment>
<comment type="interaction">
    <interactant intactId="EBI-742054">
        <id>Q96D03</id>
    </interactant>
    <interactant intactId="EBI-712629">
        <id>P63146</id>
        <label>UBE2B</label>
    </interactant>
    <organismsDiffer>false</organismsDiffer>
    <experiments>3</experiments>
</comment>
<comment type="interaction">
    <interactant intactId="EBI-742054">
        <id>Q96D03</id>
    </interactant>
    <interactant intactId="EBI-17208936">
        <id>P0CB47</id>
        <label>UBTFL1</label>
    </interactant>
    <organismsDiffer>false</organismsDiffer>
    <experiments>3</experiments>
</comment>
<comment type="interaction">
    <interactant intactId="EBI-742054">
        <id>Q96D03</id>
    </interactant>
    <interactant intactId="EBI-357430">
        <id>P61758</id>
        <label>VBP1</label>
    </interactant>
    <organismsDiffer>false</organismsDiffer>
    <experiments>3</experiments>
</comment>
<comment type="interaction">
    <interactant intactId="EBI-742054">
        <id>Q96D03</id>
    </interactant>
    <interactant intactId="EBI-11983741">
        <id>Q3SXR9</id>
        <label>VCX2</label>
    </interactant>
    <organismsDiffer>false</organismsDiffer>
    <experiments>3</experiments>
</comment>
<comment type="interaction">
    <interactant intactId="EBI-742054">
        <id>Q96D03</id>
    </interactant>
    <interactant intactId="EBI-11980193">
        <id>Q14119</id>
        <label>VEZF1</label>
    </interactant>
    <organismsDiffer>false</organismsDiffer>
    <experiments>3</experiments>
</comment>
<comment type="interaction">
    <interactant intactId="EBI-742054">
        <id>Q96D03</id>
    </interactant>
    <interactant intactId="EBI-310886">
        <id>Q9P202</id>
        <label>WHRN</label>
    </interactant>
    <organismsDiffer>false</organismsDiffer>
    <experiments>3</experiments>
</comment>
<comment type="interaction">
    <interactant intactId="EBI-742054">
        <id>Q96D03</id>
    </interactant>
    <interactant intactId="EBI-12079490">
        <id>Q9NQW7-3</id>
        <label>XPNPEP1</label>
    </interactant>
    <organismsDiffer>false</organismsDiffer>
    <experiments>3</experiments>
</comment>
<comment type="interaction">
    <interactant intactId="EBI-742054">
        <id>Q96D03</id>
    </interactant>
    <interactant intactId="EBI-515331">
        <id>P07947</id>
        <label>YES1</label>
    </interactant>
    <organismsDiffer>false</organismsDiffer>
    <experiments>3</experiments>
</comment>
<comment type="interaction">
    <interactant intactId="EBI-742054">
        <id>Q96D03</id>
    </interactant>
    <interactant intactId="EBI-2510804">
        <id>Q5VVQ6</id>
        <label>YOD1</label>
    </interactant>
    <organismsDiffer>false</organismsDiffer>
    <experiments>3</experiments>
</comment>
<comment type="interaction">
    <interactant intactId="EBI-742054">
        <id>Q96D03</id>
    </interactant>
    <interactant intactId="EBI-11721624">
        <id>P62699</id>
        <label>YPEL5</label>
    </interactant>
    <organismsDiffer>false</organismsDiffer>
    <experiments>3</experiments>
</comment>
<comment type="interaction">
    <interactant intactId="EBI-742054">
        <id>Q96D03</id>
    </interactant>
    <interactant intactId="EBI-11963196">
        <id>Q15915</id>
        <label>ZIC1</label>
    </interactant>
    <organismsDiffer>false</organismsDiffer>
    <experiments>3</experiments>
</comment>
<comment type="interaction">
    <interactant intactId="EBI-742054">
        <id>Q96D03</id>
    </interactant>
    <interactant intactId="EBI-11741890">
        <id>Q86VK4-3</id>
        <label>ZNF410</label>
    </interactant>
    <organismsDiffer>false</organismsDiffer>
    <experiments>5</experiments>
</comment>
<comment type="interaction">
    <interactant intactId="EBI-742054">
        <id>Q96D03</id>
    </interactant>
    <interactant intactId="EBI-726769">
        <id>O00488</id>
        <label>ZNF593</label>
    </interactant>
    <organismsDiffer>false</organismsDiffer>
    <experiments>3</experiments>
</comment>
<comment type="interaction">
    <interactant intactId="EBI-742054">
        <id>Q96D03</id>
    </interactant>
    <interactant intactId="EBI-7254550">
        <id>P36508</id>
        <label>ZNF76</label>
    </interactant>
    <organismsDiffer>false</organismsDiffer>
    <experiments>3</experiments>
</comment>
<comment type="interaction">
    <interactant intactId="EBI-742054">
        <id>Q96D03</id>
    </interactant>
    <interactant intactId="EBI-12834294">
        <id>Q7L2R6-2</id>
        <label>ZNF765</label>
    </interactant>
    <organismsDiffer>false</organismsDiffer>
    <experiments>3</experiments>
</comment>
<comment type="interaction">
    <interactant intactId="EBI-742054">
        <id>Q96D03</id>
    </interactant>
    <interactant intactId="EBI-5667532">
        <id>Q3MJ62</id>
        <label>ZSCAN23</label>
    </interactant>
    <organismsDiffer>false</organismsDiffer>
    <experiments>3</experiments>
</comment>
<comment type="subcellular location">
    <subcellularLocation>
        <location evidence="1">Cytoplasm</location>
    </subcellularLocation>
</comment>
<comment type="tissue specificity">
    <text evidence="2">Up-regulated in atherosclerotic plaques relative to healthy segments of the same artery.</text>
</comment>
<comment type="induction">
    <text evidence="2">Up-regulated by oxidized LDL and hypoxia in macrophages.</text>
</comment>
<comment type="similarity">
    <text evidence="5">Belongs to the DDIT4 family.</text>
</comment>
<name>DDT4L_HUMAN</name>
<evidence type="ECO:0000250" key="1"/>
<evidence type="ECO:0000269" key="2">
    <source>
    </source>
</evidence>
<evidence type="ECO:0000269" key="3">
    <source>
    </source>
</evidence>
<evidence type="ECO:0000269" key="4">
    <source>
    </source>
</evidence>
<evidence type="ECO:0000305" key="5"/>
<reference key="1">
    <citation type="journal article" date="2004" name="Nat. Genet.">
        <title>Complete sequencing and characterization of 21,243 full-length human cDNAs.</title>
        <authorList>
            <person name="Ota T."/>
            <person name="Suzuki Y."/>
            <person name="Nishikawa T."/>
            <person name="Otsuki T."/>
            <person name="Sugiyama T."/>
            <person name="Irie R."/>
            <person name="Wakamatsu A."/>
            <person name="Hayashi K."/>
            <person name="Sato H."/>
            <person name="Nagai K."/>
            <person name="Kimura K."/>
            <person name="Makita H."/>
            <person name="Sekine M."/>
            <person name="Obayashi M."/>
            <person name="Nishi T."/>
            <person name="Shibahara T."/>
            <person name="Tanaka T."/>
            <person name="Ishii S."/>
            <person name="Yamamoto J."/>
            <person name="Saito K."/>
            <person name="Kawai Y."/>
            <person name="Isono Y."/>
            <person name="Nakamura Y."/>
            <person name="Nagahari K."/>
            <person name="Murakami K."/>
            <person name="Yasuda T."/>
            <person name="Iwayanagi T."/>
            <person name="Wagatsuma M."/>
            <person name="Shiratori A."/>
            <person name="Sudo H."/>
            <person name="Hosoiri T."/>
            <person name="Kaku Y."/>
            <person name="Kodaira H."/>
            <person name="Kondo H."/>
            <person name="Sugawara M."/>
            <person name="Takahashi M."/>
            <person name="Kanda K."/>
            <person name="Yokoi T."/>
            <person name="Furuya T."/>
            <person name="Kikkawa E."/>
            <person name="Omura Y."/>
            <person name="Abe K."/>
            <person name="Kamihara K."/>
            <person name="Katsuta N."/>
            <person name="Sato K."/>
            <person name="Tanikawa M."/>
            <person name="Yamazaki M."/>
            <person name="Ninomiya K."/>
            <person name="Ishibashi T."/>
            <person name="Yamashita H."/>
            <person name="Murakawa K."/>
            <person name="Fujimori K."/>
            <person name="Tanai H."/>
            <person name="Kimata M."/>
            <person name="Watanabe M."/>
            <person name="Hiraoka S."/>
            <person name="Chiba Y."/>
            <person name="Ishida S."/>
            <person name="Ono Y."/>
            <person name="Takiguchi S."/>
            <person name="Watanabe S."/>
            <person name="Yosida M."/>
            <person name="Hotuta T."/>
            <person name="Kusano J."/>
            <person name="Kanehori K."/>
            <person name="Takahashi-Fujii A."/>
            <person name="Hara H."/>
            <person name="Tanase T.-O."/>
            <person name="Nomura Y."/>
            <person name="Togiya S."/>
            <person name="Komai F."/>
            <person name="Hara R."/>
            <person name="Takeuchi K."/>
            <person name="Arita M."/>
            <person name="Imose N."/>
            <person name="Musashino K."/>
            <person name="Yuuki H."/>
            <person name="Oshima A."/>
            <person name="Sasaki N."/>
            <person name="Aotsuka S."/>
            <person name="Yoshikawa Y."/>
            <person name="Matsunawa H."/>
            <person name="Ichihara T."/>
            <person name="Shiohata N."/>
            <person name="Sano S."/>
            <person name="Moriya S."/>
            <person name="Momiyama H."/>
            <person name="Satoh N."/>
            <person name="Takami S."/>
            <person name="Terashima Y."/>
            <person name="Suzuki O."/>
            <person name="Nakagawa S."/>
            <person name="Senoh A."/>
            <person name="Mizoguchi H."/>
            <person name="Goto Y."/>
            <person name="Shimizu F."/>
            <person name="Wakebe H."/>
            <person name="Hishigaki H."/>
            <person name="Watanabe T."/>
            <person name="Sugiyama A."/>
            <person name="Takemoto M."/>
            <person name="Kawakami B."/>
            <person name="Yamazaki M."/>
            <person name="Watanabe K."/>
            <person name="Kumagai A."/>
            <person name="Itakura S."/>
            <person name="Fukuzumi Y."/>
            <person name="Fujimori Y."/>
            <person name="Komiyama M."/>
            <person name="Tashiro H."/>
            <person name="Tanigami A."/>
            <person name="Fujiwara T."/>
            <person name="Ono T."/>
            <person name="Yamada K."/>
            <person name="Fujii Y."/>
            <person name="Ozaki K."/>
            <person name="Hirao M."/>
            <person name="Ohmori Y."/>
            <person name="Kawabata A."/>
            <person name="Hikiji T."/>
            <person name="Kobatake N."/>
            <person name="Inagaki H."/>
            <person name="Ikema Y."/>
            <person name="Okamoto S."/>
            <person name="Okitani R."/>
            <person name="Kawakami T."/>
            <person name="Noguchi S."/>
            <person name="Itoh T."/>
            <person name="Shigeta K."/>
            <person name="Senba T."/>
            <person name="Matsumura K."/>
            <person name="Nakajima Y."/>
            <person name="Mizuno T."/>
            <person name="Morinaga M."/>
            <person name="Sasaki M."/>
            <person name="Togashi T."/>
            <person name="Oyama M."/>
            <person name="Hata H."/>
            <person name="Watanabe M."/>
            <person name="Komatsu T."/>
            <person name="Mizushima-Sugano J."/>
            <person name="Satoh T."/>
            <person name="Shirai Y."/>
            <person name="Takahashi Y."/>
            <person name="Nakagawa K."/>
            <person name="Okumura K."/>
            <person name="Nagase T."/>
            <person name="Nomura N."/>
            <person name="Kikuchi H."/>
            <person name="Masuho Y."/>
            <person name="Yamashita R."/>
            <person name="Nakai K."/>
            <person name="Yada T."/>
            <person name="Nakamura Y."/>
            <person name="Ohara O."/>
            <person name="Isogai T."/>
            <person name="Sugano S."/>
        </authorList>
    </citation>
    <scope>NUCLEOTIDE SEQUENCE [LARGE SCALE MRNA]</scope>
    <source>
        <tissue>Cerebellum</tissue>
        <tissue>Tongue</tissue>
    </source>
</reference>
<reference key="2">
    <citation type="journal article" date="2007" name="BMC Genomics">
        <title>The full-ORF clone resource of the German cDNA consortium.</title>
        <authorList>
            <person name="Bechtel S."/>
            <person name="Rosenfelder H."/>
            <person name="Duda A."/>
            <person name="Schmidt C.P."/>
            <person name="Ernst U."/>
            <person name="Wellenreuther R."/>
            <person name="Mehrle A."/>
            <person name="Schuster C."/>
            <person name="Bahr A."/>
            <person name="Bloecker H."/>
            <person name="Heubner D."/>
            <person name="Hoerlein A."/>
            <person name="Michel G."/>
            <person name="Wedler H."/>
            <person name="Koehrer K."/>
            <person name="Ottenwaelder B."/>
            <person name="Poustka A."/>
            <person name="Wiemann S."/>
            <person name="Schupp I."/>
        </authorList>
    </citation>
    <scope>NUCLEOTIDE SEQUENCE [LARGE SCALE MRNA]</scope>
    <source>
        <tissue>Lymph node</tissue>
    </source>
</reference>
<reference key="3">
    <citation type="submission" date="2005-07" db="EMBL/GenBank/DDBJ databases">
        <authorList>
            <person name="Mural R.J."/>
            <person name="Istrail S."/>
            <person name="Sutton G.G."/>
            <person name="Florea L."/>
            <person name="Halpern A.L."/>
            <person name="Mobarry C.M."/>
            <person name="Lippert R."/>
            <person name="Walenz B."/>
            <person name="Shatkay H."/>
            <person name="Dew I."/>
            <person name="Miller J.R."/>
            <person name="Flanigan M.J."/>
            <person name="Edwards N.J."/>
            <person name="Bolanos R."/>
            <person name="Fasulo D."/>
            <person name="Halldorsson B.V."/>
            <person name="Hannenhalli S."/>
            <person name="Turner R."/>
            <person name="Yooseph S."/>
            <person name="Lu F."/>
            <person name="Nusskern D.R."/>
            <person name="Shue B.C."/>
            <person name="Zheng X.H."/>
            <person name="Zhong F."/>
            <person name="Delcher A.L."/>
            <person name="Huson D.H."/>
            <person name="Kravitz S.A."/>
            <person name="Mouchard L."/>
            <person name="Reinert K."/>
            <person name="Remington K.A."/>
            <person name="Clark A.G."/>
            <person name="Waterman M.S."/>
            <person name="Eichler E.E."/>
            <person name="Adams M.D."/>
            <person name="Hunkapiller M.W."/>
            <person name="Myers E.W."/>
            <person name="Venter J.C."/>
        </authorList>
    </citation>
    <scope>NUCLEOTIDE SEQUENCE [LARGE SCALE GENOMIC DNA]</scope>
</reference>
<reference key="4">
    <citation type="journal article" date="2004" name="Genome Res.">
        <title>The status, quality, and expansion of the NIH full-length cDNA project: the Mammalian Gene Collection (MGC).</title>
        <authorList>
            <consortium name="The MGC Project Team"/>
        </authorList>
    </citation>
    <scope>NUCLEOTIDE SEQUENCE [LARGE SCALE MRNA]</scope>
    <source>
        <tissue>Lung</tissue>
    </source>
</reference>
<reference key="5">
    <citation type="journal article" date="2002" name="Mol. Cell">
        <title>REDD1, a developmentally regulated transcriptional target of p63 and p53, links p63 to regulation of reactive oxygen species.</title>
        <authorList>
            <person name="Ellisen L.W."/>
            <person name="Ramsayer K.D."/>
            <person name="Johannessen C.M."/>
            <person name="Yang A."/>
            <person name="Beppu H."/>
            <person name="Minda K."/>
            <person name="Oliner J.D."/>
            <person name="McKeon F."/>
            <person name="Haber D.A."/>
        </authorList>
    </citation>
    <scope>IDENTIFICATION</scope>
</reference>
<reference key="6">
    <citation type="journal article" date="2004" name="Arterioscler. Thromb. Vasc. Biol.">
        <title>REDD2 gene is upregulated by modified LDL or hypoxia and mediates human macrophage cell death.</title>
        <authorList>
            <person name="Cuaz-Perolin C."/>
            <person name="Furman C."/>
            <person name="Larigauderie G."/>
            <person name="Legedz L."/>
            <person name="Lasselin C."/>
            <person name="Copin C."/>
            <person name="Jaye M."/>
            <person name="Searfoss G."/>
            <person name="Yu K.T."/>
            <person name="Duverger N."/>
            <person name="Negre-Salvayre A."/>
            <person name="Fruchart J.-C."/>
            <person name="Rouis M."/>
        </authorList>
    </citation>
    <scope>TISSUE SPECIFICITY</scope>
    <scope>INDUCTION</scope>
</reference>
<reference key="7">
    <citation type="journal article" date="2004" name="Genes Dev.">
        <title>Regulation of mTOR function in response to hypoxia by REDD1 and the TSC1/TSC2 tumor suppressor complex.</title>
        <authorList>
            <person name="Brugarolas J."/>
            <person name="Lei K."/>
            <person name="Hurley R.L."/>
            <person name="Manning B.D."/>
            <person name="Reiling J.H."/>
            <person name="Hafen E."/>
            <person name="Witters L.A."/>
            <person name="Ellisen L.W."/>
            <person name="Kaelin W.G. Jr."/>
        </authorList>
    </citation>
    <scope>FUNCTION</scope>
</reference>
<reference key="8">
    <citation type="journal article" date="2005" name="J. Biol. Chem.">
        <title>The stress-inducted proteins RTP801 and RTP801L are negative regulators of the mammalian target of rapamycin pathway.</title>
        <authorList>
            <person name="Corradetti M.N."/>
            <person name="Inoki K."/>
            <person name="Guan K.-L."/>
        </authorList>
    </citation>
    <scope>FUNCTION</scope>
</reference>
<proteinExistence type="evidence at protein level"/>
<organism>
    <name type="scientific">Homo sapiens</name>
    <name type="common">Human</name>
    <dbReference type="NCBI Taxonomy" id="9606"/>
    <lineage>
        <taxon>Eukaryota</taxon>
        <taxon>Metazoa</taxon>
        <taxon>Chordata</taxon>
        <taxon>Craniata</taxon>
        <taxon>Vertebrata</taxon>
        <taxon>Euteleostomi</taxon>
        <taxon>Mammalia</taxon>
        <taxon>Eutheria</taxon>
        <taxon>Euarchontoglires</taxon>
        <taxon>Primates</taxon>
        <taxon>Haplorrhini</taxon>
        <taxon>Catarrhini</taxon>
        <taxon>Hominidae</taxon>
        <taxon>Homo</taxon>
    </lineage>
</organism>
<feature type="chain" id="PRO_0000307204" description="DNA damage-inducible transcript 4-like protein">
    <location>
        <begin position="1"/>
        <end position="193"/>
    </location>
</feature>
<feature type="sequence variant" id="VAR_053971" description="In dbSNP:rs11553154.">
    <original>S</original>
    <variation>F</variation>
    <location>
        <position position="161"/>
    </location>
</feature>
<sequence>MVATGSLSSKNPASISELLDCGYHPESLLSDFDYWDYVVPEPNLNEVIFEESTCQNLVKMLENCLSKSKQTKLGCSKVLVPEKLTQRIAQDVLRLSSTEPCGLRGCVMHVNLEIENVCKKLDRIVCDSSVVPTFELTLVFKQENCSWTSFRDFFFSRGRFSSGFRRTLILSSGFRLVKKKLYSLIGTTVIEGS</sequence>
<accession>Q96D03</accession>
<accession>B2R7C3</accession>
<dbReference type="EMBL" id="AK094236">
    <property type="protein sequence ID" value="BAC04315.1"/>
    <property type="molecule type" value="mRNA"/>
</dbReference>
<dbReference type="EMBL" id="AK312926">
    <property type="protein sequence ID" value="BAG35770.1"/>
    <property type="molecule type" value="mRNA"/>
</dbReference>
<dbReference type="EMBL" id="AL832277">
    <property type="protein sequence ID" value="CAI46176.1"/>
    <property type="molecule type" value="mRNA"/>
</dbReference>
<dbReference type="EMBL" id="CH471057">
    <property type="protein sequence ID" value="EAX06119.1"/>
    <property type="molecule type" value="Genomic_DNA"/>
</dbReference>
<dbReference type="EMBL" id="BC013592">
    <property type="protein sequence ID" value="AAH13592.1"/>
    <property type="molecule type" value="mRNA"/>
</dbReference>
<dbReference type="CCDS" id="CCDS34036.1"/>
<dbReference type="RefSeq" id="NP_660287.1">
    <property type="nucleotide sequence ID" value="NM_145244.4"/>
</dbReference>
<dbReference type="SMR" id="Q96D03"/>
<dbReference type="BioGRID" id="125421">
    <property type="interactions" value="163"/>
</dbReference>
<dbReference type="FunCoup" id="Q96D03">
    <property type="interactions" value="498"/>
</dbReference>
<dbReference type="IntAct" id="Q96D03">
    <property type="interactions" value="213"/>
</dbReference>
<dbReference type="STRING" id="9606.ENSP00000354830"/>
<dbReference type="MoonDB" id="Q96D03">
    <property type="type" value="Predicted"/>
</dbReference>
<dbReference type="iPTMnet" id="Q96D03"/>
<dbReference type="PhosphoSitePlus" id="Q96D03"/>
<dbReference type="BioMuta" id="DDIT4L"/>
<dbReference type="DMDM" id="74731396"/>
<dbReference type="MassIVE" id="Q96D03"/>
<dbReference type="PaxDb" id="9606-ENSP00000354830"/>
<dbReference type="PeptideAtlas" id="Q96D03"/>
<dbReference type="ProteomicsDB" id="76241"/>
<dbReference type="Antibodypedia" id="25978">
    <property type="antibodies" value="242 antibodies from 22 providers"/>
</dbReference>
<dbReference type="DNASU" id="115265"/>
<dbReference type="Ensembl" id="ENST00000273990.6">
    <property type="protein sequence ID" value="ENSP00000354830.2"/>
    <property type="gene ID" value="ENSG00000145358.6"/>
</dbReference>
<dbReference type="GeneID" id="115265"/>
<dbReference type="KEGG" id="hsa:115265"/>
<dbReference type="MANE-Select" id="ENST00000273990.6">
    <property type="protein sequence ID" value="ENSP00000354830.2"/>
    <property type="RefSeq nucleotide sequence ID" value="NM_145244.4"/>
    <property type="RefSeq protein sequence ID" value="NP_660287.1"/>
</dbReference>
<dbReference type="UCSC" id="uc003hvq.4">
    <property type="organism name" value="human"/>
</dbReference>
<dbReference type="AGR" id="HGNC:30555"/>
<dbReference type="CTD" id="115265"/>
<dbReference type="DisGeNET" id="115265"/>
<dbReference type="GeneCards" id="DDIT4L"/>
<dbReference type="HGNC" id="HGNC:30555">
    <property type="gene designation" value="DDIT4L"/>
</dbReference>
<dbReference type="HPA" id="ENSG00000145358">
    <property type="expression patterns" value="Group enriched (skeletal muscle, tongue)"/>
</dbReference>
<dbReference type="MIM" id="607730">
    <property type="type" value="gene"/>
</dbReference>
<dbReference type="neXtProt" id="NX_Q96D03"/>
<dbReference type="OpenTargets" id="ENSG00000145358"/>
<dbReference type="PharmGKB" id="PA128394749"/>
<dbReference type="VEuPathDB" id="HostDB:ENSG00000145358"/>
<dbReference type="eggNOG" id="ENOG502R3EE">
    <property type="taxonomic scope" value="Eukaryota"/>
</dbReference>
<dbReference type="GeneTree" id="ENSGT00530000063652"/>
<dbReference type="InParanoid" id="Q96D03"/>
<dbReference type="OMA" id="VFKQDNC"/>
<dbReference type="OrthoDB" id="10018535at2759"/>
<dbReference type="PAN-GO" id="Q96D03">
    <property type="GO annotations" value="0 GO annotations based on evolutionary models"/>
</dbReference>
<dbReference type="PhylomeDB" id="Q96D03"/>
<dbReference type="TreeFam" id="TF105007"/>
<dbReference type="PathwayCommons" id="Q96D03"/>
<dbReference type="SignaLink" id="Q96D03"/>
<dbReference type="BioGRID-ORCS" id="115265">
    <property type="hits" value="14 hits in 1138 CRISPR screens"/>
</dbReference>
<dbReference type="GenomeRNAi" id="115265"/>
<dbReference type="Pharos" id="Q96D03">
    <property type="development level" value="Tbio"/>
</dbReference>
<dbReference type="PRO" id="PR:Q96D03"/>
<dbReference type="Proteomes" id="UP000005640">
    <property type="component" value="Chromosome 4"/>
</dbReference>
<dbReference type="RNAct" id="Q96D03">
    <property type="molecule type" value="protein"/>
</dbReference>
<dbReference type="Bgee" id="ENSG00000145358">
    <property type="expression patterns" value="Expressed in deltoid and 149 other cell types or tissues"/>
</dbReference>
<dbReference type="ExpressionAtlas" id="Q96D03">
    <property type="expression patterns" value="baseline and differential"/>
</dbReference>
<dbReference type="GO" id="GO:0005737">
    <property type="term" value="C:cytoplasm"/>
    <property type="evidence" value="ECO:0000250"/>
    <property type="project" value="UniProtKB"/>
</dbReference>
<dbReference type="GO" id="GO:0009968">
    <property type="term" value="P:negative regulation of signal transduction"/>
    <property type="evidence" value="ECO:0007669"/>
    <property type="project" value="InterPro"/>
</dbReference>
<dbReference type="FunFam" id="3.90.470.40:FF:000002">
    <property type="entry name" value="DNA damage-inducible transcript 4-like protein"/>
    <property type="match status" value="1"/>
</dbReference>
<dbReference type="Gene3D" id="3.90.470.40">
    <property type="entry name" value="RTP801-like"/>
    <property type="match status" value="1"/>
</dbReference>
<dbReference type="InterPro" id="IPR012918">
    <property type="entry name" value="RTP801-like"/>
</dbReference>
<dbReference type="InterPro" id="IPR038281">
    <property type="entry name" value="RTP801-like_C_sf"/>
</dbReference>
<dbReference type="PANTHER" id="PTHR12478:SF17">
    <property type="entry name" value="DNA DAMAGE-INDUCIBLE TRANSCRIPT 4-LIKE PROTEIN"/>
    <property type="match status" value="1"/>
</dbReference>
<dbReference type="PANTHER" id="PTHR12478">
    <property type="entry name" value="DNA-DAMAGE-INDUCIBLE TRANSCRIPT 4 PROTEIN DDIT4"/>
    <property type="match status" value="1"/>
</dbReference>
<dbReference type="Pfam" id="PF07809">
    <property type="entry name" value="RTP801_C"/>
    <property type="match status" value="1"/>
</dbReference>